<accession>A5V652</accession>
<protein>
    <recommendedName>
        <fullName evidence="1">7-cyano-7-deazaguanine synthase</fullName>
        <ecNumber evidence="1">6.3.4.20</ecNumber>
    </recommendedName>
    <alternativeName>
        <fullName evidence="1">7-cyano-7-carbaguanine synthase</fullName>
    </alternativeName>
    <alternativeName>
        <fullName evidence="1">PreQ(0) synthase</fullName>
    </alternativeName>
    <alternativeName>
        <fullName evidence="1">Queuosine biosynthesis protein QueC</fullName>
    </alternativeName>
</protein>
<sequence length="230" mass="24412">MSDNANREGRRAIVLLSGGLDSMVSGGIAREQGFALAALTIDYNQRHRVELEAAKRVAAALGVDRHVTLPLNLRAFGGSSLTDDIDVPKDGVMPGIPSTYVPARNTIFLSLALGFAEATGARDIFLGVNALDYSGYPDCRPEFIAAFQHLADLATKMGVEGQGFTIHAPLQHMTKADIAQEAARLGLDAGMSWSCYDPTPDGKHCGLCDSCRLRSKGFADAGLADPTVYA</sequence>
<keyword id="KW-0067">ATP-binding</keyword>
<keyword id="KW-0436">Ligase</keyword>
<keyword id="KW-0479">Metal-binding</keyword>
<keyword id="KW-0547">Nucleotide-binding</keyword>
<keyword id="KW-0671">Queuosine biosynthesis</keyword>
<keyword id="KW-1185">Reference proteome</keyword>
<keyword id="KW-0862">Zinc</keyword>
<evidence type="ECO:0000255" key="1">
    <source>
        <dbReference type="HAMAP-Rule" id="MF_01633"/>
    </source>
</evidence>
<proteinExistence type="inferred from homology"/>
<dbReference type="EC" id="6.3.4.20" evidence="1"/>
<dbReference type="EMBL" id="CP000699">
    <property type="protein sequence ID" value="ABQ67768.1"/>
    <property type="molecule type" value="Genomic_DNA"/>
</dbReference>
<dbReference type="SMR" id="A5V652"/>
<dbReference type="STRING" id="392499.Swit_1404"/>
<dbReference type="PaxDb" id="392499-Swit_1404"/>
<dbReference type="KEGG" id="swi:Swit_1404"/>
<dbReference type="eggNOG" id="COG0603">
    <property type="taxonomic scope" value="Bacteria"/>
</dbReference>
<dbReference type="HOGENOM" id="CLU_081854_1_1_5"/>
<dbReference type="OrthoDB" id="9789567at2"/>
<dbReference type="UniPathway" id="UPA00391"/>
<dbReference type="Proteomes" id="UP000001989">
    <property type="component" value="Chromosome"/>
</dbReference>
<dbReference type="GO" id="GO:0005524">
    <property type="term" value="F:ATP binding"/>
    <property type="evidence" value="ECO:0007669"/>
    <property type="project" value="UniProtKB-UniRule"/>
</dbReference>
<dbReference type="GO" id="GO:0016879">
    <property type="term" value="F:ligase activity, forming carbon-nitrogen bonds"/>
    <property type="evidence" value="ECO:0007669"/>
    <property type="project" value="UniProtKB-UniRule"/>
</dbReference>
<dbReference type="GO" id="GO:0008270">
    <property type="term" value="F:zinc ion binding"/>
    <property type="evidence" value="ECO:0007669"/>
    <property type="project" value="UniProtKB-UniRule"/>
</dbReference>
<dbReference type="GO" id="GO:0008616">
    <property type="term" value="P:queuosine biosynthetic process"/>
    <property type="evidence" value="ECO:0007669"/>
    <property type="project" value="UniProtKB-UniRule"/>
</dbReference>
<dbReference type="CDD" id="cd01995">
    <property type="entry name" value="QueC-like"/>
    <property type="match status" value="1"/>
</dbReference>
<dbReference type="Gene3D" id="3.40.50.620">
    <property type="entry name" value="HUPs"/>
    <property type="match status" value="1"/>
</dbReference>
<dbReference type="HAMAP" id="MF_01633">
    <property type="entry name" value="QueC"/>
    <property type="match status" value="1"/>
</dbReference>
<dbReference type="InterPro" id="IPR018317">
    <property type="entry name" value="QueC"/>
</dbReference>
<dbReference type="InterPro" id="IPR014729">
    <property type="entry name" value="Rossmann-like_a/b/a_fold"/>
</dbReference>
<dbReference type="NCBIfam" id="TIGR00364">
    <property type="entry name" value="7-cyano-7-deazaguanine synthase QueC"/>
    <property type="match status" value="1"/>
</dbReference>
<dbReference type="PANTHER" id="PTHR42914">
    <property type="entry name" value="7-CYANO-7-DEAZAGUANINE SYNTHASE"/>
    <property type="match status" value="1"/>
</dbReference>
<dbReference type="PANTHER" id="PTHR42914:SF1">
    <property type="entry name" value="7-CYANO-7-DEAZAGUANINE SYNTHASE"/>
    <property type="match status" value="1"/>
</dbReference>
<dbReference type="Pfam" id="PF06508">
    <property type="entry name" value="QueC"/>
    <property type="match status" value="1"/>
</dbReference>
<dbReference type="PIRSF" id="PIRSF006293">
    <property type="entry name" value="ExsB"/>
    <property type="match status" value="1"/>
</dbReference>
<dbReference type="SUPFAM" id="SSF52402">
    <property type="entry name" value="Adenine nucleotide alpha hydrolases-like"/>
    <property type="match status" value="1"/>
</dbReference>
<feature type="chain" id="PRO_0000336952" description="7-cyano-7-deazaguanine synthase">
    <location>
        <begin position="1"/>
        <end position="230"/>
    </location>
</feature>
<feature type="binding site" evidence="1">
    <location>
        <begin position="16"/>
        <end position="26"/>
    </location>
    <ligand>
        <name>ATP</name>
        <dbReference type="ChEBI" id="CHEBI:30616"/>
    </ligand>
</feature>
<feature type="binding site" evidence="1">
    <location>
        <position position="195"/>
    </location>
    <ligand>
        <name>Zn(2+)</name>
        <dbReference type="ChEBI" id="CHEBI:29105"/>
    </ligand>
</feature>
<feature type="binding site" evidence="1">
    <location>
        <position position="205"/>
    </location>
    <ligand>
        <name>Zn(2+)</name>
        <dbReference type="ChEBI" id="CHEBI:29105"/>
    </ligand>
</feature>
<feature type="binding site" evidence="1">
    <location>
        <position position="208"/>
    </location>
    <ligand>
        <name>Zn(2+)</name>
        <dbReference type="ChEBI" id="CHEBI:29105"/>
    </ligand>
</feature>
<feature type="binding site" evidence="1">
    <location>
        <position position="211"/>
    </location>
    <ligand>
        <name>Zn(2+)</name>
        <dbReference type="ChEBI" id="CHEBI:29105"/>
    </ligand>
</feature>
<organism>
    <name type="scientific">Rhizorhabdus wittichii (strain DSM 6014 / CCUG 31198 / JCM 15750 / NBRC 105917 / EY 4224 / RW1)</name>
    <name type="common">Sphingomonas wittichii</name>
    <dbReference type="NCBI Taxonomy" id="392499"/>
    <lineage>
        <taxon>Bacteria</taxon>
        <taxon>Pseudomonadati</taxon>
        <taxon>Pseudomonadota</taxon>
        <taxon>Alphaproteobacteria</taxon>
        <taxon>Sphingomonadales</taxon>
        <taxon>Sphingomonadaceae</taxon>
        <taxon>Rhizorhabdus</taxon>
    </lineage>
</organism>
<comment type="function">
    <text evidence="1">Catalyzes the ATP-dependent conversion of 7-carboxy-7-deazaguanine (CDG) to 7-cyano-7-deazaguanine (preQ(0)).</text>
</comment>
<comment type="catalytic activity">
    <reaction evidence="1">
        <text>7-carboxy-7-deazaguanine + NH4(+) + ATP = 7-cyano-7-deazaguanine + ADP + phosphate + H2O + H(+)</text>
        <dbReference type="Rhea" id="RHEA:27982"/>
        <dbReference type="ChEBI" id="CHEBI:15377"/>
        <dbReference type="ChEBI" id="CHEBI:15378"/>
        <dbReference type="ChEBI" id="CHEBI:28938"/>
        <dbReference type="ChEBI" id="CHEBI:30616"/>
        <dbReference type="ChEBI" id="CHEBI:43474"/>
        <dbReference type="ChEBI" id="CHEBI:45075"/>
        <dbReference type="ChEBI" id="CHEBI:61036"/>
        <dbReference type="ChEBI" id="CHEBI:456216"/>
        <dbReference type="EC" id="6.3.4.20"/>
    </reaction>
</comment>
<comment type="cofactor">
    <cofactor evidence="1">
        <name>Zn(2+)</name>
        <dbReference type="ChEBI" id="CHEBI:29105"/>
    </cofactor>
    <text evidence="1">Binds 1 zinc ion per subunit.</text>
</comment>
<comment type="pathway">
    <text evidence="1">Purine metabolism; 7-cyano-7-deazaguanine biosynthesis.</text>
</comment>
<comment type="similarity">
    <text evidence="1">Belongs to the QueC family.</text>
</comment>
<reference key="1">
    <citation type="journal article" date="2010" name="J. Bacteriol.">
        <title>Genome sequence of the dioxin-mineralizing bacterium Sphingomonas wittichii RW1.</title>
        <authorList>
            <person name="Miller T.R."/>
            <person name="Delcher A.L."/>
            <person name="Salzberg S.L."/>
            <person name="Saunders E."/>
            <person name="Detter J.C."/>
            <person name="Halden R.U."/>
        </authorList>
    </citation>
    <scope>NUCLEOTIDE SEQUENCE [LARGE SCALE GENOMIC DNA]</scope>
    <source>
        <strain>DSM 6014 / CCUG 31198 / JCM 15750 / NBRC 105917 / EY 4224 / RW1</strain>
    </source>
</reference>
<gene>
    <name evidence="1" type="primary">queC</name>
    <name type="ordered locus">Swit_1404</name>
</gene>
<name>QUEC_RHIWR</name>